<keyword id="KW-0903">Direct protein sequencing</keyword>
<keyword id="KW-0325">Glycoprotein</keyword>
<keyword id="KW-0964">Secreted</keyword>
<keyword id="KW-0732">Signal</keyword>
<reference evidence="6" key="1">
    <citation type="journal article" date="2006" name="BMC Genomics">
        <title>Comparative salivary gland transcriptomics of sandfly vectors of visceral leishmaniasis.</title>
        <authorList>
            <person name="Anderson J.M."/>
            <person name="Oliveira F."/>
            <person name="Kamhawi S."/>
            <person name="Mans B.J."/>
            <person name="Reynoso D."/>
            <person name="Seitz A.E."/>
            <person name="Lawyer P."/>
            <person name="Garfield M."/>
            <person name="Pham M."/>
            <person name="Valenzuela J.G."/>
        </authorList>
    </citation>
    <scope>NUCLEOTIDE SEQUENCE [LARGE SCALE MRNA]</scope>
    <scope>PROTEIN SEQUENCE OF 19-38</scope>
    <scope>TISSUE SPECIFICITY</scope>
    <source>
        <tissue evidence="4">Salivary gland</tissue>
    </source>
</reference>
<reference evidence="5" key="2">
    <citation type="journal article" date="2019" name="Insect Biochem. Mol. Biol.">
        <title>Amine-binding properties of salivary yellow-related proteins in phlebotomine sand flies.</title>
        <authorList>
            <person name="Sumova P."/>
            <person name="Sima M."/>
            <person name="Kalouskova B."/>
            <person name="Polanska N."/>
            <person name="Vanek O."/>
            <person name="Oliveira F."/>
            <person name="Valenzuela J.G."/>
            <person name="Volf P."/>
        </authorList>
    </citation>
    <scope>FUNCTION</scope>
</reference>
<evidence type="ECO:0000255" key="1">
    <source>
        <dbReference type="PROSITE-ProRule" id="PRU00498"/>
    </source>
</evidence>
<evidence type="ECO:0000269" key="2">
    <source>
    </source>
</evidence>
<evidence type="ECO:0000269" key="3">
    <source>
    </source>
</evidence>
<evidence type="ECO:0000303" key="4">
    <source>
    </source>
</evidence>
<evidence type="ECO:0000305" key="5"/>
<evidence type="ECO:0000312" key="6">
    <source>
        <dbReference type="EMBL" id="ABA43050.1"/>
    </source>
</evidence>
<dbReference type="EMBL" id="DQ150622">
    <property type="protein sequence ID" value="ABA43050.1"/>
    <property type="molecule type" value="mRNA"/>
</dbReference>
<dbReference type="SMR" id="Q0ZS87"/>
<dbReference type="GO" id="GO:0005576">
    <property type="term" value="C:extracellular region"/>
    <property type="evidence" value="ECO:0007669"/>
    <property type="project" value="UniProtKB-SubCell"/>
</dbReference>
<dbReference type="Gene3D" id="2.120.10.30">
    <property type="entry name" value="TolB, C-terminal domain"/>
    <property type="match status" value="1"/>
</dbReference>
<dbReference type="InterPro" id="IPR011042">
    <property type="entry name" value="6-blade_b-propeller_TolB-like"/>
</dbReference>
<dbReference type="InterPro" id="IPR017996">
    <property type="entry name" value="Royal_jelly/protein_yellow"/>
</dbReference>
<dbReference type="PANTHER" id="PTHR10009">
    <property type="entry name" value="PROTEIN YELLOW-RELATED"/>
    <property type="match status" value="1"/>
</dbReference>
<dbReference type="PANTHER" id="PTHR10009:SF11">
    <property type="entry name" value="RH54244P"/>
    <property type="match status" value="1"/>
</dbReference>
<dbReference type="Pfam" id="PF03022">
    <property type="entry name" value="MRJP"/>
    <property type="match status" value="1"/>
</dbReference>
<dbReference type="SUPFAM" id="SSF75011">
    <property type="entry name" value="3-carboxy-cis,cis-mucoante lactonizing enzyme"/>
    <property type="match status" value="1"/>
</dbReference>
<sequence length="393" mass="44615">MKIFLCLIAVVFLQGVVGFHVEREYAWKNISYEGVDPALFNIDNIIPTGFVHDAINKKIFIAVPRRSPQIPFTLTELDTTKHPERSPPLSKFPGSDKLINVYQPVIDECRRLWIADVGRVDYKGDEQKYPNQNAVLIAYDLTKENYPEIHRYEIPSKIAGSNTIPFGGFAVDVTNPKEGCGKTFVYITNFEDNTLIVYDQEKKDSWKISHGSFKPEHDSTLSHDGKQYKYRVGLFGITLGDRDPEGNRPAYYIAGSSTKLFEISTKILKEKGAKFDPVNLGNRGPHTEAVALVYDPKTKVIFFAESDSRQVSCWNTQKPLNHKNTDVIFASAKFIYGSDISVDSESQLWFLSTGHPPIPNLKLTFDKPHIRLMRVDTAKAIRRTRCEVKPRKP</sequence>
<organism>
    <name type="scientific">Phlebotomus perniciosus</name>
    <name type="common">Phlebotomine sand fly</name>
    <dbReference type="NCBI Taxonomy" id="13204"/>
    <lineage>
        <taxon>Eukaryota</taxon>
        <taxon>Metazoa</taxon>
        <taxon>Ecdysozoa</taxon>
        <taxon>Arthropoda</taxon>
        <taxon>Hexapoda</taxon>
        <taxon>Insecta</taxon>
        <taxon>Pterygota</taxon>
        <taxon>Neoptera</taxon>
        <taxon>Endopterygota</taxon>
        <taxon>Diptera</taxon>
        <taxon>Nematocera</taxon>
        <taxon>Psychodoidea</taxon>
        <taxon>Psychodidae</taxon>
        <taxon>Phlebotomus</taxon>
        <taxon>Larroussius</taxon>
    </lineage>
</organism>
<proteinExistence type="evidence at protein level"/>
<feature type="signal peptide" evidence="2">
    <location>
        <begin position="1"/>
        <end position="18"/>
    </location>
</feature>
<feature type="chain" id="PRO_5004179544" description="Yellow-related salivary protein SP03B" evidence="5">
    <location>
        <begin position="19"/>
        <end position="393"/>
    </location>
</feature>
<feature type="glycosylation site" description="N-linked (GlcNAc...) asparagine" evidence="1">
    <location>
        <position position="29"/>
    </location>
</feature>
<comment type="function">
    <text evidence="3 5">Probably modulates blood feeding of sand flies on vertebrate species by binding and sequestering different mediators involved in the host response (Probable). Binds biogenic amines (PubMed:31604119). Binds serotonin with high affinity (PubMed:31604119). Poorly binds histamine (PubMed:31604119). Does not bind dopamine, noradrenaline, adrenaline and octopamine (PubMed:31604119).</text>
</comment>
<comment type="subcellular location">
    <subcellularLocation>
        <location evidence="5">Secreted</location>
    </subcellularLocation>
</comment>
<comment type="tissue specificity">
    <text evidence="2">Female salivary gland (at protein level).</text>
</comment>
<comment type="similarity">
    <text evidence="5">Belongs to the major royal jelly protein family.</text>
</comment>
<name>SPO3B_PHLPE</name>
<protein>
    <recommendedName>
        <fullName evidence="5">Yellow-related salivary protein SP03B</fullName>
    </recommendedName>
    <alternativeName>
        <fullName evidence="4">PpeSP03B</fullName>
    </alternativeName>
</protein>
<accession>Q0ZS87</accession>